<accession>Q1WBT4</accession>
<evidence type="ECO:0000250" key="1">
    <source>
        <dbReference type="UniProtKB" id="Q6NTF7"/>
    </source>
</evidence>
<evidence type="ECO:0000255" key="2">
    <source>
        <dbReference type="PROSITE-ProRule" id="PRU01083"/>
    </source>
</evidence>
<evidence type="ECO:0000303" key="3">
    <source>
    </source>
</evidence>
<evidence type="ECO:0000305" key="4"/>
<feature type="chain" id="PRO_0000291665" description="DNA dC-&gt;dU-editing enzyme APOBEC-3H">
    <location>
        <begin position="1"/>
        <end position="211"/>
    </location>
</feature>
<feature type="domain" description="CMP/dCMP-type deaminase" evidence="2">
    <location>
        <begin position="4"/>
        <end position="126"/>
    </location>
</feature>
<feature type="active site" description="Proton donor" evidence="2">
    <location>
        <position position="56"/>
    </location>
</feature>
<feature type="binding site" evidence="2">
    <location>
        <position position="54"/>
    </location>
    <ligand>
        <name>Zn(2+)</name>
        <dbReference type="ChEBI" id="CHEBI:29105"/>
        <note>catalytic</note>
    </ligand>
</feature>
<feature type="binding site" evidence="2">
    <location>
        <position position="85"/>
    </location>
    <ligand>
        <name>Zn(2+)</name>
        <dbReference type="ChEBI" id="CHEBI:29105"/>
        <note>catalytic</note>
    </ligand>
</feature>
<feature type="binding site" evidence="2">
    <location>
        <position position="88"/>
    </location>
    <ligand>
        <name>Zn(2+)</name>
        <dbReference type="ChEBI" id="CHEBI:29105"/>
        <note>catalytic</note>
    </ligand>
</feature>
<name>ABC3H_PONPY</name>
<dbReference type="EC" id="3.5.4.38" evidence="1"/>
<dbReference type="EMBL" id="DQ408610">
    <property type="protein sequence ID" value="ABD72581.1"/>
    <property type="molecule type" value="Genomic_DNA"/>
</dbReference>
<dbReference type="SMR" id="Q1WBT4"/>
<dbReference type="GO" id="GO:0005737">
    <property type="term" value="C:cytoplasm"/>
    <property type="evidence" value="ECO:0000250"/>
    <property type="project" value="UniProtKB"/>
</dbReference>
<dbReference type="GO" id="GO:0005634">
    <property type="term" value="C:nucleus"/>
    <property type="evidence" value="ECO:0000250"/>
    <property type="project" value="UniProtKB"/>
</dbReference>
<dbReference type="GO" id="GO:0000932">
    <property type="term" value="C:P-body"/>
    <property type="evidence" value="ECO:0000250"/>
    <property type="project" value="UniProtKB"/>
</dbReference>
<dbReference type="GO" id="GO:0004126">
    <property type="term" value="F:cytidine deaminase activity"/>
    <property type="evidence" value="ECO:0000250"/>
    <property type="project" value="UniProtKB"/>
</dbReference>
<dbReference type="GO" id="GO:0003723">
    <property type="term" value="F:RNA binding"/>
    <property type="evidence" value="ECO:0007669"/>
    <property type="project" value="TreeGrafter"/>
</dbReference>
<dbReference type="GO" id="GO:0008270">
    <property type="term" value="F:zinc ion binding"/>
    <property type="evidence" value="ECO:0007669"/>
    <property type="project" value="InterPro"/>
</dbReference>
<dbReference type="GO" id="GO:0016554">
    <property type="term" value="P:cytidine to uridine editing"/>
    <property type="evidence" value="ECO:0007669"/>
    <property type="project" value="TreeGrafter"/>
</dbReference>
<dbReference type="GO" id="GO:0051607">
    <property type="term" value="P:defense response to virus"/>
    <property type="evidence" value="ECO:0000250"/>
    <property type="project" value="UniProtKB"/>
</dbReference>
<dbReference type="GO" id="GO:0070383">
    <property type="term" value="P:DNA cytosine deamination"/>
    <property type="evidence" value="ECO:0000250"/>
    <property type="project" value="UniProtKB"/>
</dbReference>
<dbReference type="GO" id="GO:0045087">
    <property type="term" value="P:innate immune response"/>
    <property type="evidence" value="ECO:0007669"/>
    <property type="project" value="UniProtKB-KW"/>
</dbReference>
<dbReference type="GO" id="GO:0044828">
    <property type="term" value="P:negative regulation by host of viral genome replication"/>
    <property type="evidence" value="ECO:0000250"/>
    <property type="project" value="UniProtKB"/>
</dbReference>
<dbReference type="GO" id="GO:0045869">
    <property type="term" value="P:negative regulation of single stranded viral RNA replication via double stranded DNA intermediate"/>
    <property type="evidence" value="ECO:0007669"/>
    <property type="project" value="TreeGrafter"/>
</dbReference>
<dbReference type="CDD" id="cd01283">
    <property type="entry name" value="cytidine_deaminase"/>
    <property type="match status" value="1"/>
</dbReference>
<dbReference type="FunFam" id="3.40.140.10:FF:000047">
    <property type="entry name" value="Apolipoprotein B editing enzyme catalytic polypeptide-like 3H"/>
    <property type="match status" value="1"/>
</dbReference>
<dbReference type="Gene3D" id="3.40.140.10">
    <property type="entry name" value="Cytidine Deaminase, domain 2"/>
    <property type="match status" value="1"/>
</dbReference>
<dbReference type="InterPro" id="IPR016192">
    <property type="entry name" value="APOBEC/CMP_deaminase_Zn-bd"/>
</dbReference>
<dbReference type="InterPro" id="IPR041512">
    <property type="entry name" value="APOBEC3H"/>
</dbReference>
<dbReference type="InterPro" id="IPR050610">
    <property type="entry name" value="APOBEC_Cyt_Deaminase"/>
</dbReference>
<dbReference type="InterPro" id="IPR002125">
    <property type="entry name" value="CMP_dCMP_dom"/>
</dbReference>
<dbReference type="InterPro" id="IPR016193">
    <property type="entry name" value="Cytidine_deaminase-like"/>
</dbReference>
<dbReference type="PANTHER" id="PTHR13857:SF43">
    <property type="entry name" value="DNA DC-DU-EDITING ENZYME APOBEC-3H"/>
    <property type="match status" value="1"/>
</dbReference>
<dbReference type="PANTHER" id="PTHR13857">
    <property type="entry name" value="MRNA EDITING ENZYME"/>
    <property type="match status" value="1"/>
</dbReference>
<dbReference type="Pfam" id="PF18771">
    <property type="entry name" value="APOBEC3"/>
    <property type="match status" value="1"/>
</dbReference>
<dbReference type="SUPFAM" id="SSF53927">
    <property type="entry name" value="Cytidine deaminase-like"/>
    <property type="match status" value="1"/>
</dbReference>
<dbReference type="PROSITE" id="PS00903">
    <property type="entry name" value="CYT_DCMP_DEAMINASES_1"/>
    <property type="match status" value="1"/>
</dbReference>
<dbReference type="PROSITE" id="PS51747">
    <property type="entry name" value="CYT_DCMP_DEAMINASES_2"/>
    <property type="match status" value="1"/>
</dbReference>
<sequence>MALLTAKTFSLQFNNKRRIKRPYYPRKALLCYQLTPQNGSTPTRGYFKNKKKCHAEIRFINEIKSMGLDETQCYQVTCYLTWSPCPSCVRELVAFIKAHDHLNLRIFASRLYCHWCRRQQEGLRLLCGSQVPVEVMGSREFADCWENFVDHEKPLSFNPSEMLEELDKNSRAIKRRLERIKQSWSVDVLENGLRSLQLGPVSSSLSRSNSR</sequence>
<gene>
    <name evidence="3" type="primary">APOBEC3H</name>
</gene>
<proteinExistence type="evidence at transcript level"/>
<organism>
    <name type="scientific">Pongo pygmaeus</name>
    <name type="common">Bornean orangutan</name>
    <dbReference type="NCBI Taxonomy" id="9600"/>
    <lineage>
        <taxon>Eukaryota</taxon>
        <taxon>Metazoa</taxon>
        <taxon>Chordata</taxon>
        <taxon>Craniata</taxon>
        <taxon>Vertebrata</taxon>
        <taxon>Euteleostomi</taxon>
        <taxon>Mammalia</taxon>
        <taxon>Eutheria</taxon>
        <taxon>Euarchontoglires</taxon>
        <taxon>Primates</taxon>
        <taxon>Haplorrhini</taxon>
        <taxon>Catarrhini</taxon>
        <taxon>Hominidae</taxon>
        <taxon>Pongo</taxon>
    </lineage>
</organism>
<comment type="function">
    <text evidence="1">DNA deaminase (cytidine deaminase) which may act as an inhibitor of retrovirus replication and retrotransposon mobility via deaminase-dependent and -independent mechanisms.</text>
</comment>
<comment type="catalytic activity">
    <reaction evidence="1">
        <text>a 2'-deoxycytidine in single-stranded DNA + H2O + H(+) = a 2'-deoxyuridine in single-stranded DNA + NH4(+)</text>
        <dbReference type="Rhea" id="RHEA:50948"/>
        <dbReference type="Rhea" id="RHEA-COMP:12846"/>
        <dbReference type="Rhea" id="RHEA-COMP:12847"/>
        <dbReference type="ChEBI" id="CHEBI:15377"/>
        <dbReference type="ChEBI" id="CHEBI:15378"/>
        <dbReference type="ChEBI" id="CHEBI:28938"/>
        <dbReference type="ChEBI" id="CHEBI:85452"/>
        <dbReference type="ChEBI" id="CHEBI:133902"/>
        <dbReference type="EC" id="3.5.4.38"/>
    </reaction>
</comment>
<comment type="cofactor">
    <cofactor evidence="1">
        <name>Zn(2+)</name>
        <dbReference type="ChEBI" id="CHEBI:29105"/>
    </cofactor>
</comment>
<comment type="subunit">
    <text evidence="1">Homodimer.</text>
</comment>
<comment type="subcellular location">
    <subcellularLocation>
        <location evidence="1">Cytoplasm</location>
    </subcellularLocation>
</comment>
<comment type="miscellaneous">
    <text evidence="1">APOBEC3H from old world monkeys has retained its antiviral activity, while it is lost in other primates.</text>
</comment>
<comment type="similarity">
    <text evidence="4">Belongs to the cytidine and deoxycytidylate deaminase family.</text>
</comment>
<reference key="1">
    <citation type="journal article" date="2006" name="J. Virol.">
        <title>Adaptive evolution and antiviral activity of the conserved mammalian cytidine deaminase APOBEC3H.</title>
        <authorList>
            <person name="OhAinle M."/>
            <person name="Kerns J.A."/>
            <person name="Malik H.S."/>
            <person name="Emerman M."/>
        </authorList>
    </citation>
    <scope>NUCLEOTIDE SEQUENCE [MRNA]</scope>
</reference>
<keyword id="KW-0051">Antiviral defense</keyword>
<keyword id="KW-0963">Cytoplasm</keyword>
<keyword id="KW-0378">Hydrolase</keyword>
<keyword id="KW-0391">Immunity</keyword>
<keyword id="KW-0399">Innate immunity</keyword>
<keyword id="KW-0479">Metal-binding</keyword>
<keyword id="KW-0862">Zinc</keyword>
<protein>
    <recommendedName>
        <fullName>DNA dC-&gt;dU-editing enzyme APOBEC-3H</fullName>
        <ecNumber evidence="1">3.5.4.38</ecNumber>
    </recommendedName>
    <alternativeName>
        <fullName>Apolipoprotein B mRNA-editing enzyme catalytic polypeptide-like 3H</fullName>
    </alternativeName>
</protein>